<protein>
    <recommendedName>
        <fullName>UPF0561 protein C2orf68 homolog</fullName>
    </recommendedName>
</protein>
<sequence length="164" mass="19135">MEVIRDGEGESVKYKPGGRLDMSHGFLRHIRRNQIARDDYDREVKQAKEKQRRRHTNTPRRPRRPDRQVYNPRIRNGSEPGVNAEAEDWNESSSGTEMENTGTELFWLDYQADNGKITSFIVHKEDKPEVIVQRVAEKNVLDSSMRAALLARVGQEMNKRCDKR</sequence>
<feature type="chain" id="PRO_0000328787" description="UPF0561 protein C2orf68 homolog">
    <location>
        <begin position="1"/>
        <end position="164"/>
    </location>
</feature>
<feature type="region of interest" description="Disordered" evidence="1">
    <location>
        <begin position="1"/>
        <end position="98"/>
    </location>
</feature>
<feature type="compositionally biased region" description="Basic and acidic residues" evidence="1">
    <location>
        <begin position="1"/>
        <end position="13"/>
    </location>
</feature>
<feature type="compositionally biased region" description="Basic and acidic residues" evidence="1">
    <location>
        <begin position="35"/>
        <end position="49"/>
    </location>
</feature>
<feature type="compositionally biased region" description="Basic residues" evidence="1">
    <location>
        <begin position="50"/>
        <end position="64"/>
    </location>
</feature>
<comment type="similarity">
    <text evidence="2">Belongs to the UPF0561 family.</text>
</comment>
<dbReference type="EMBL" id="BX537304">
    <property type="protein sequence ID" value="CAM56507.1"/>
    <property type="molecule type" value="Genomic_DNA"/>
</dbReference>
<dbReference type="RefSeq" id="NP_001108165.1">
    <property type="nucleotide sequence ID" value="NM_001114693.1"/>
</dbReference>
<dbReference type="SMR" id="A3KQ58"/>
<dbReference type="FunCoup" id="A3KQ58">
    <property type="interactions" value="1187"/>
</dbReference>
<dbReference type="PaxDb" id="7955-ENSDARP00000077103"/>
<dbReference type="Ensembl" id="ENSDART00000136605">
    <property type="protein sequence ID" value="ENSDARP00000119204"/>
    <property type="gene ID" value="ENSDARG00000059459"/>
</dbReference>
<dbReference type="GeneID" id="100001127"/>
<dbReference type="KEGG" id="dre:100001127"/>
<dbReference type="AGR" id="ZFIN:ZDB-GENE-060526-154"/>
<dbReference type="ZFIN" id="ZDB-GENE-060526-154">
    <property type="gene designation" value="si:ch211-283h6.4"/>
</dbReference>
<dbReference type="eggNOG" id="ENOG502S396">
    <property type="taxonomic scope" value="Eukaryota"/>
</dbReference>
<dbReference type="HOGENOM" id="CLU_100251_0_0_1"/>
<dbReference type="InParanoid" id="A3KQ58"/>
<dbReference type="OMA" id="FCLEYEG"/>
<dbReference type="OrthoDB" id="10033037at2759"/>
<dbReference type="PhylomeDB" id="A3KQ58"/>
<dbReference type="PRO" id="PR:A3KQ58"/>
<dbReference type="Proteomes" id="UP000000437">
    <property type="component" value="Chromosome 5"/>
</dbReference>
<dbReference type="Bgee" id="ENSDARG00000059459">
    <property type="expression patterns" value="Expressed in testis and 20 other cell types or tissues"/>
</dbReference>
<dbReference type="InterPro" id="IPR018888">
    <property type="entry name" value="UPF0561"/>
</dbReference>
<dbReference type="PANTHER" id="PTHR34256">
    <property type="entry name" value="UPF0561 PROTEIN C2ORF68"/>
    <property type="match status" value="1"/>
</dbReference>
<dbReference type="PANTHER" id="PTHR34256:SF1">
    <property type="entry name" value="UPF0561 PROTEIN C2ORF68"/>
    <property type="match status" value="1"/>
</dbReference>
<dbReference type="Pfam" id="PF10573">
    <property type="entry name" value="UPF0561"/>
    <property type="match status" value="1"/>
</dbReference>
<accession>A3KQ58</accession>
<name>CB068_DANRE</name>
<gene>
    <name type="ORF">si:ch211-283h6.4</name>
</gene>
<proteinExistence type="inferred from homology"/>
<keyword id="KW-1185">Reference proteome</keyword>
<evidence type="ECO:0000256" key="1">
    <source>
        <dbReference type="SAM" id="MobiDB-lite"/>
    </source>
</evidence>
<evidence type="ECO:0000305" key="2"/>
<organism>
    <name type="scientific">Danio rerio</name>
    <name type="common">Zebrafish</name>
    <name type="synonym">Brachydanio rerio</name>
    <dbReference type="NCBI Taxonomy" id="7955"/>
    <lineage>
        <taxon>Eukaryota</taxon>
        <taxon>Metazoa</taxon>
        <taxon>Chordata</taxon>
        <taxon>Craniata</taxon>
        <taxon>Vertebrata</taxon>
        <taxon>Euteleostomi</taxon>
        <taxon>Actinopterygii</taxon>
        <taxon>Neopterygii</taxon>
        <taxon>Teleostei</taxon>
        <taxon>Ostariophysi</taxon>
        <taxon>Cypriniformes</taxon>
        <taxon>Danionidae</taxon>
        <taxon>Danioninae</taxon>
        <taxon>Danio</taxon>
    </lineage>
</organism>
<reference key="1">
    <citation type="journal article" date="2013" name="Nature">
        <title>The zebrafish reference genome sequence and its relationship to the human genome.</title>
        <authorList>
            <person name="Howe K."/>
            <person name="Clark M.D."/>
            <person name="Torroja C.F."/>
            <person name="Torrance J."/>
            <person name="Berthelot C."/>
            <person name="Muffato M."/>
            <person name="Collins J.E."/>
            <person name="Humphray S."/>
            <person name="McLaren K."/>
            <person name="Matthews L."/>
            <person name="McLaren S."/>
            <person name="Sealy I."/>
            <person name="Caccamo M."/>
            <person name="Churcher C."/>
            <person name="Scott C."/>
            <person name="Barrett J.C."/>
            <person name="Koch R."/>
            <person name="Rauch G.J."/>
            <person name="White S."/>
            <person name="Chow W."/>
            <person name="Kilian B."/>
            <person name="Quintais L.T."/>
            <person name="Guerra-Assuncao J.A."/>
            <person name="Zhou Y."/>
            <person name="Gu Y."/>
            <person name="Yen J."/>
            <person name="Vogel J.H."/>
            <person name="Eyre T."/>
            <person name="Redmond S."/>
            <person name="Banerjee R."/>
            <person name="Chi J."/>
            <person name="Fu B."/>
            <person name="Langley E."/>
            <person name="Maguire S.F."/>
            <person name="Laird G.K."/>
            <person name="Lloyd D."/>
            <person name="Kenyon E."/>
            <person name="Donaldson S."/>
            <person name="Sehra H."/>
            <person name="Almeida-King J."/>
            <person name="Loveland J."/>
            <person name="Trevanion S."/>
            <person name="Jones M."/>
            <person name="Quail M."/>
            <person name="Willey D."/>
            <person name="Hunt A."/>
            <person name="Burton J."/>
            <person name="Sims S."/>
            <person name="McLay K."/>
            <person name="Plumb B."/>
            <person name="Davis J."/>
            <person name="Clee C."/>
            <person name="Oliver K."/>
            <person name="Clark R."/>
            <person name="Riddle C."/>
            <person name="Elliot D."/>
            <person name="Threadgold G."/>
            <person name="Harden G."/>
            <person name="Ware D."/>
            <person name="Begum S."/>
            <person name="Mortimore B."/>
            <person name="Kerry G."/>
            <person name="Heath P."/>
            <person name="Phillimore B."/>
            <person name="Tracey A."/>
            <person name="Corby N."/>
            <person name="Dunn M."/>
            <person name="Johnson C."/>
            <person name="Wood J."/>
            <person name="Clark S."/>
            <person name="Pelan S."/>
            <person name="Griffiths G."/>
            <person name="Smith M."/>
            <person name="Glithero R."/>
            <person name="Howden P."/>
            <person name="Barker N."/>
            <person name="Lloyd C."/>
            <person name="Stevens C."/>
            <person name="Harley J."/>
            <person name="Holt K."/>
            <person name="Panagiotidis G."/>
            <person name="Lovell J."/>
            <person name="Beasley H."/>
            <person name="Henderson C."/>
            <person name="Gordon D."/>
            <person name="Auger K."/>
            <person name="Wright D."/>
            <person name="Collins J."/>
            <person name="Raisen C."/>
            <person name="Dyer L."/>
            <person name="Leung K."/>
            <person name="Robertson L."/>
            <person name="Ambridge K."/>
            <person name="Leongamornlert D."/>
            <person name="McGuire S."/>
            <person name="Gilderthorp R."/>
            <person name="Griffiths C."/>
            <person name="Manthravadi D."/>
            <person name="Nichol S."/>
            <person name="Barker G."/>
            <person name="Whitehead S."/>
            <person name="Kay M."/>
            <person name="Brown J."/>
            <person name="Murnane C."/>
            <person name="Gray E."/>
            <person name="Humphries M."/>
            <person name="Sycamore N."/>
            <person name="Barker D."/>
            <person name="Saunders D."/>
            <person name="Wallis J."/>
            <person name="Babbage A."/>
            <person name="Hammond S."/>
            <person name="Mashreghi-Mohammadi M."/>
            <person name="Barr L."/>
            <person name="Martin S."/>
            <person name="Wray P."/>
            <person name="Ellington A."/>
            <person name="Matthews N."/>
            <person name="Ellwood M."/>
            <person name="Woodmansey R."/>
            <person name="Clark G."/>
            <person name="Cooper J."/>
            <person name="Tromans A."/>
            <person name="Grafham D."/>
            <person name="Skuce C."/>
            <person name="Pandian R."/>
            <person name="Andrews R."/>
            <person name="Harrison E."/>
            <person name="Kimberley A."/>
            <person name="Garnett J."/>
            <person name="Fosker N."/>
            <person name="Hall R."/>
            <person name="Garner P."/>
            <person name="Kelly D."/>
            <person name="Bird C."/>
            <person name="Palmer S."/>
            <person name="Gehring I."/>
            <person name="Berger A."/>
            <person name="Dooley C.M."/>
            <person name="Ersan-Urun Z."/>
            <person name="Eser C."/>
            <person name="Geiger H."/>
            <person name="Geisler M."/>
            <person name="Karotki L."/>
            <person name="Kirn A."/>
            <person name="Konantz J."/>
            <person name="Konantz M."/>
            <person name="Oberlander M."/>
            <person name="Rudolph-Geiger S."/>
            <person name="Teucke M."/>
            <person name="Lanz C."/>
            <person name="Raddatz G."/>
            <person name="Osoegawa K."/>
            <person name="Zhu B."/>
            <person name="Rapp A."/>
            <person name="Widaa S."/>
            <person name="Langford C."/>
            <person name="Yang F."/>
            <person name="Schuster S.C."/>
            <person name="Carter N.P."/>
            <person name="Harrow J."/>
            <person name="Ning Z."/>
            <person name="Herrero J."/>
            <person name="Searle S.M."/>
            <person name="Enright A."/>
            <person name="Geisler R."/>
            <person name="Plasterk R.H."/>
            <person name="Lee C."/>
            <person name="Westerfield M."/>
            <person name="de Jong P.J."/>
            <person name="Zon L.I."/>
            <person name="Postlethwait J.H."/>
            <person name="Nusslein-Volhard C."/>
            <person name="Hubbard T.J."/>
            <person name="Roest Crollius H."/>
            <person name="Rogers J."/>
            <person name="Stemple D.L."/>
        </authorList>
    </citation>
    <scope>NUCLEOTIDE SEQUENCE [LARGE SCALE GENOMIC DNA]</scope>
    <source>
        <strain>Tuebingen</strain>
    </source>
</reference>